<organism>
    <name type="scientific">Brachyspira hyodysenteriae (strain ATCC 49526 / WA1)</name>
    <dbReference type="NCBI Taxonomy" id="565034"/>
    <lineage>
        <taxon>Bacteria</taxon>
        <taxon>Pseudomonadati</taxon>
        <taxon>Spirochaetota</taxon>
        <taxon>Spirochaetia</taxon>
        <taxon>Brachyspirales</taxon>
        <taxon>Brachyspiraceae</taxon>
        <taxon>Brachyspira</taxon>
    </lineage>
</organism>
<sequence length="354" mass="40716">MKSFLSDKAKSIEPYTPGEQPKDKNYIKLNTNESPYPPSPYVKKALIESNFDDLRLYPDPNVSDLKKEIAELYNINTNNIFIGNGSDEILAFCFMAFFNRGDKIYYPNITYSFYSVYSSLFDLNEVKIPLKDDFTIDINDYKNLDSGIFIANPNAPTGLLLTLDQLEEIIINNKDNIVIIDEAYIDFAAIESAYKLTKKYDNLLVVQTFSKSRSLAGIRLGFAIGNENLIQGLKNIKYSFNSYTINRLSIIAGIEAIKDNQYFKDTVNKVINTREKTKIKLKELGFNVLDSKSNFIFISHKNIFAEDLYLKLKDKGILVRYFKSDLINNYIRVTIGTDEEMDIFVEKIKYIIKN</sequence>
<dbReference type="EC" id="2.6.1.9" evidence="1"/>
<dbReference type="EMBL" id="CP001357">
    <property type="protein sequence ID" value="ACN84128.1"/>
    <property type="molecule type" value="Genomic_DNA"/>
</dbReference>
<dbReference type="RefSeq" id="WP_012671170.1">
    <property type="nucleotide sequence ID" value="NC_012225.1"/>
</dbReference>
<dbReference type="SMR" id="C0R1Z0"/>
<dbReference type="STRING" id="565034.BHWA1_01658"/>
<dbReference type="GeneID" id="63962757"/>
<dbReference type="KEGG" id="bhy:BHWA1_01658"/>
<dbReference type="eggNOG" id="COG0079">
    <property type="taxonomic scope" value="Bacteria"/>
</dbReference>
<dbReference type="HOGENOM" id="CLU_017584_3_0_12"/>
<dbReference type="UniPathway" id="UPA00031">
    <property type="reaction ID" value="UER00012"/>
</dbReference>
<dbReference type="Proteomes" id="UP000001803">
    <property type="component" value="Chromosome"/>
</dbReference>
<dbReference type="GO" id="GO:0004400">
    <property type="term" value="F:histidinol-phosphate transaminase activity"/>
    <property type="evidence" value="ECO:0007669"/>
    <property type="project" value="UniProtKB-UniRule"/>
</dbReference>
<dbReference type="GO" id="GO:0030170">
    <property type="term" value="F:pyridoxal phosphate binding"/>
    <property type="evidence" value="ECO:0007669"/>
    <property type="project" value="InterPro"/>
</dbReference>
<dbReference type="GO" id="GO:0000105">
    <property type="term" value="P:L-histidine biosynthetic process"/>
    <property type="evidence" value="ECO:0007669"/>
    <property type="project" value="UniProtKB-UniRule"/>
</dbReference>
<dbReference type="CDD" id="cd00609">
    <property type="entry name" value="AAT_like"/>
    <property type="match status" value="1"/>
</dbReference>
<dbReference type="Gene3D" id="3.90.1150.10">
    <property type="entry name" value="Aspartate Aminotransferase, domain 1"/>
    <property type="match status" value="1"/>
</dbReference>
<dbReference type="Gene3D" id="3.40.640.10">
    <property type="entry name" value="Type I PLP-dependent aspartate aminotransferase-like (Major domain)"/>
    <property type="match status" value="1"/>
</dbReference>
<dbReference type="HAMAP" id="MF_01023">
    <property type="entry name" value="HisC_aminotrans_2"/>
    <property type="match status" value="1"/>
</dbReference>
<dbReference type="InterPro" id="IPR001917">
    <property type="entry name" value="Aminotrans_II_pyridoxalP_BS"/>
</dbReference>
<dbReference type="InterPro" id="IPR004839">
    <property type="entry name" value="Aminotransferase_I/II_large"/>
</dbReference>
<dbReference type="InterPro" id="IPR005861">
    <property type="entry name" value="HisP_aminotrans"/>
</dbReference>
<dbReference type="InterPro" id="IPR050106">
    <property type="entry name" value="HistidinolP_aminotransfase"/>
</dbReference>
<dbReference type="InterPro" id="IPR015424">
    <property type="entry name" value="PyrdxlP-dep_Trfase"/>
</dbReference>
<dbReference type="InterPro" id="IPR015421">
    <property type="entry name" value="PyrdxlP-dep_Trfase_major"/>
</dbReference>
<dbReference type="InterPro" id="IPR015422">
    <property type="entry name" value="PyrdxlP-dep_Trfase_small"/>
</dbReference>
<dbReference type="NCBIfam" id="TIGR01141">
    <property type="entry name" value="hisC"/>
    <property type="match status" value="1"/>
</dbReference>
<dbReference type="PANTHER" id="PTHR43643:SF3">
    <property type="entry name" value="HISTIDINOL-PHOSPHATE AMINOTRANSFERASE"/>
    <property type="match status" value="1"/>
</dbReference>
<dbReference type="PANTHER" id="PTHR43643">
    <property type="entry name" value="HISTIDINOL-PHOSPHATE AMINOTRANSFERASE 2"/>
    <property type="match status" value="1"/>
</dbReference>
<dbReference type="Pfam" id="PF00155">
    <property type="entry name" value="Aminotran_1_2"/>
    <property type="match status" value="1"/>
</dbReference>
<dbReference type="SUPFAM" id="SSF53383">
    <property type="entry name" value="PLP-dependent transferases"/>
    <property type="match status" value="1"/>
</dbReference>
<dbReference type="PROSITE" id="PS00599">
    <property type="entry name" value="AA_TRANSFER_CLASS_2"/>
    <property type="match status" value="1"/>
</dbReference>
<proteinExistence type="inferred from homology"/>
<gene>
    <name evidence="1" type="primary">hisC</name>
    <name type="ordered locus">BHWA1_01658</name>
</gene>
<evidence type="ECO:0000255" key="1">
    <source>
        <dbReference type="HAMAP-Rule" id="MF_01023"/>
    </source>
</evidence>
<evidence type="ECO:0000256" key="2">
    <source>
        <dbReference type="SAM" id="MobiDB-lite"/>
    </source>
</evidence>
<reference key="1">
    <citation type="journal article" date="2009" name="PLoS ONE">
        <title>Genome sequence of the pathogenic intestinal spirochete Brachyspira hyodysenteriae reveals adaptations to its lifestyle in the porcine large intestine.</title>
        <authorList>
            <person name="Bellgard M.I."/>
            <person name="Wanchanthuek P."/>
            <person name="La T."/>
            <person name="Ryan K."/>
            <person name="Moolhuijzen P."/>
            <person name="Albertyn Z."/>
            <person name="Shaban B."/>
            <person name="Motro Y."/>
            <person name="Dunn D.S."/>
            <person name="Schibeci D."/>
            <person name="Hunter A."/>
            <person name="Barrero R."/>
            <person name="Phillips N.D."/>
            <person name="Hampson D.J."/>
        </authorList>
    </citation>
    <scope>NUCLEOTIDE SEQUENCE [LARGE SCALE GENOMIC DNA]</scope>
    <source>
        <strain>ATCC 49526 / WA1</strain>
    </source>
</reference>
<feature type="chain" id="PRO_1000149082" description="Histidinol-phosphate aminotransferase">
    <location>
        <begin position="1"/>
        <end position="354"/>
    </location>
</feature>
<feature type="region of interest" description="Disordered" evidence="2">
    <location>
        <begin position="1"/>
        <end position="33"/>
    </location>
</feature>
<feature type="compositionally biased region" description="Basic and acidic residues" evidence="2">
    <location>
        <begin position="1"/>
        <end position="11"/>
    </location>
</feature>
<feature type="modified residue" description="N6-(pyridoxal phosphate)lysine" evidence="1">
    <location>
        <position position="211"/>
    </location>
</feature>
<keyword id="KW-0028">Amino-acid biosynthesis</keyword>
<keyword id="KW-0032">Aminotransferase</keyword>
<keyword id="KW-0368">Histidine biosynthesis</keyword>
<keyword id="KW-0663">Pyridoxal phosphate</keyword>
<keyword id="KW-0808">Transferase</keyword>
<protein>
    <recommendedName>
        <fullName evidence="1">Histidinol-phosphate aminotransferase</fullName>
        <ecNumber evidence="1">2.6.1.9</ecNumber>
    </recommendedName>
    <alternativeName>
        <fullName evidence="1">Imidazole acetol-phosphate transaminase</fullName>
    </alternativeName>
</protein>
<comment type="catalytic activity">
    <reaction evidence="1">
        <text>L-histidinol phosphate + 2-oxoglutarate = 3-(imidazol-4-yl)-2-oxopropyl phosphate + L-glutamate</text>
        <dbReference type="Rhea" id="RHEA:23744"/>
        <dbReference type="ChEBI" id="CHEBI:16810"/>
        <dbReference type="ChEBI" id="CHEBI:29985"/>
        <dbReference type="ChEBI" id="CHEBI:57766"/>
        <dbReference type="ChEBI" id="CHEBI:57980"/>
        <dbReference type="EC" id="2.6.1.9"/>
    </reaction>
</comment>
<comment type="cofactor">
    <cofactor evidence="1">
        <name>pyridoxal 5'-phosphate</name>
        <dbReference type="ChEBI" id="CHEBI:597326"/>
    </cofactor>
</comment>
<comment type="pathway">
    <text evidence="1">Amino-acid biosynthesis; L-histidine biosynthesis; L-histidine from 5-phospho-alpha-D-ribose 1-diphosphate: step 7/9.</text>
</comment>
<comment type="subunit">
    <text evidence="1">Homodimer.</text>
</comment>
<comment type="similarity">
    <text evidence="1">Belongs to the class-II pyridoxal-phosphate-dependent aminotransferase family. Histidinol-phosphate aminotransferase subfamily.</text>
</comment>
<accession>C0R1Z0</accession>
<name>HIS8_BRAHW</name>